<evidence type="ECO:0000255" key="1"/>
<evidence type="ECO:0000255" key="2">
    <source>
        <dbReference type="PROSITE-ProRule" id="PRU00498"/>
    </source>
</evidence>
<evidence type="ECO:0000303" key="3">
    <source>
    </source>
</evidence>
<evidence type="ECO:0000305" key="4"/>
<evidence type="ECO:0000312" key="5">
    <source>
        <dbReference type="Araport" id="AT4G13810"/>
    </source>
</evidence>
<evidence type="ECO:0000312" key="6">
    <source>
        <dbReference type="EMBL" id="CAB36845.1"/>
    </source>
</evidence>
<accession>Q9SVN2</accession>
<accession>F4JTT4</accession>
<dbReference type="EMBL" id="AL035528">
    <property type="protein sequence ID" value="CAB36845.1"/>
    <property type="status" value="ALT_SEQ"/>
    <property type="molecule type" value="Genomic_DNA"/>
</dbReference>
<dbReference type="EMBL" id="AL161537">
    <property type="protein sequence ID" value="CAB78423.1"/>
    <property type="status" value="ALT_SEQ"/>
    <property type="molecule type" value="Genomic_DNA"/>
</dbReference>
<dbReference type="EMBL" id="CP002687">
    <property type="protein sequence ID" value="AEE83328.1"/>
    <property type="molecule type" value="Genomic_DNA"/>
</dbReference>
<dbReference type="PIR" id="T05250">
    <property type="entry name" value="T05250"/>
</dbReference>
<dbReference type="RefSeq" id="NP_001190722.1">
    <molecule id="Q9SVN2-2"/>
    <property type="nucleotide sequence ID" value="NM_001203793.2"/>
</dbReference>
<dbReference type="SMR" id="Q9SVN2"/>
<dbReference type="FunCoup" id="Q9SVN2">
    <property type="interactions" value="138"/>
</dbReference>
<dbReference type="IntAct" id="Q9SVN2">
    <property type="interactions" value="1"/>
</dbReference>
<dbReference type="STRING" id="3702.Q9SVN2"/>
<dbReference type="GlyCosmos" id="Q9SVN2">
    <property type="glycosylation" value="14 sites, No reported glycans"/>
</dbReference>
<dbReference type="GlyGen" id="Q9SVN2">
    <property type="glycosylation" value="14 sites"/>
</dbReference>
<dbReference type="PaxDb" id="3702-AT4G13810.1"/>
<dbReference type="ProteomicsDB" id="228008">
    <molecule id="Q9SVN2-1"/>
</dbReference>
<dbReference type="EnsemblPlants" id="AT4G13810.2">
    <molecule id="Q9SVN2-2"/>
    <property type="protein sequence ID" value="AT4G13810.2"/>
    <property type="gene ID" value="AT4G13810"/>
</dbReference>
<dbReference type="GeneID" id="827015"/>
<dbReference type="Gramene" id="AT4G13810.2">
    <molecule id="Q9SVN2-2"/>
    <property type="protein sequence ID" value="AT4G13810.2"/>
    <property type="gene ID" value="AT4G13810"/>
</dbReference>
<dbReference type="KEGG" id="ath:AT4G13810"/>
<dbReference type="Araport" id="AT4G13810"/>
<dbReference type="TAIR" id="AT4G13810">
    <property type="gene designation" value="RLP47"/>
</dbReference>
<dbReference type="HOGENOM" id="CLU_000288_18_3_1"/>
<dbReference type="InParanoid" id="Q9SVN2"/>
<dbReference type="OMA" id="RIFHYFT"/>
<dbReference type="PhylomeDB" id="Q9SVN2"/>
<dbReference type="PRO" id="PR:Q9SVN2"/>
<dbReference type="Proteomes" id="UP000006548">
    <property type="component" value="Chromosome 4"/>
</dbReference>
<dbReference type="ExpressionAtlas" id="Q9SVN2">
    <property type="expression patterns" value="baseline and differential"/>
</dbReference>
<dbReference type="GO" id="GO:0005886">
    <property type="term" value="C:plasma membrane"/>
    <property type="evidence" value="ECO:0007669"/>
    <property type="project" value="UniProtKB-SubCell"/>
</dbReference>
<dbReference type="FunFam" id="3.80.10.10:FF:000400">
    <property type="entry name" value="Nuclear pore complex protein NUP107"/>
    <property type="match status" value="1"/>
</dbReference>
<dbReference type="FunFam" id="3.80.10.10:FF:000213">
    <property type="entry name" value="Tyrosine-sulfated glycopeptide receptor 1"/>
    <property type="match status" value="1"/>
</dbReference>
<dbReference type="Gene3D" id="3.80.10.10">
    <property type="entry name" value="Ribonuclease Inhibitor"/>
    <property type="match status" value="4"/>
</dbReference>
<dbReference type="InterPro" id="IPR001611">
    <property type="entry name" value="Leu-rich_rpt"/>
</dbReference>
<dbReference type="InterPro" id="IPR003591">
    <property type="entry name" value="Leu-rich_rpt_typical-subtyp"/>
</dbReference>
<dbReference type="InterPro" id="IPR032675">
    <property type="entry name" value="LRR_dom_sf"/>
</dbReference>
<dbReference type="InterPro" id="IPR013210">
    <property type="entry name" value="LRR_N_plant-typ"/>
</dbReference>
<dbReference type="InterPro" id="IPR052595">
    <property type="entry name" value="LRRC69/RLP"/>
</dbReference>
<dbReference type="PANTHER" id="PTHR48057:SF30">
    <property type="entry name" value="DNA-DAMAGE-REPAIR_TOLERATION DRT100-LIKE PROTEIN"/>
    <property type="match status" value="1"/>
</dbReference>
<dbReference type="PANTHER" id="PTHR48057">
    <property type="entry name" value="LEUCINE-RICH REPEAT SERINE/THREONINE-PROTEIN KINASE 1"/>
    <property type="match status" value="1"/>
</dbReference>
<dbReference type="Pfam" id="PF00560">
    <property type="entry name" value="LRR_1"/>
    <property type="match status" value="8"/>
</dbReference>
<dbReference type="Pfam" id="PF13516">
    <property type="entry name" value="LRR_6"/>
    <property type="match status" value="1"/>
</dbReference>
<dbReference type="Pfam" id="PF13855">
    <property type="entry name" value="LRR_8"/>
    <property type="match status" value="1"/>
</dbReference>
<dbReference type="Pfam" id="PF08263">
    <property type="entry name" value="LRRNT_2"/>
    <property type="match status" value="1"/>
</dbReference>
<dbReference type="PRINTS" id="PR00019">
    <property type="entry name" value="LEURICHRPT"/>
</dbReference>
<dbReference type="SMART" id="SM00369">
    <property type="entry name" value="LRR_TYP"/>
    <property type="match status" value="6"/>
</dbReference>
<dbReference type="SUPFAM" id="SSF52058">
    <property type="entry name" value="L domain-like"/>
    <property type="match status" value="2"/>
</dbReference>
<dbReference type="PROSITE" id="PS51450">
    <property type="entry name" value="LRR"/>
    <property type="match status" value="12"/>
</dbReference>
<feature type="signal peptide" evidence="1">
    <location>
        <begin position="1"/>
        <end position="31"/>
    </location>
</feature>
<feature type="chain" id="PRO_0000444115" description="Receptor-like protein 47">
    <location>
        <begin position="32"/>
        <end position="800"/>
    </location>
</feature>
<feature type="topological domain" description="Extracellular" evidence="1">
    <location>
        <begin position="32"/>
        <end position="759"/>
    </location>
</feature>
<feature type="transmembrane region" description="Helical" evidence="1">
    <location>
        <begin position="760"/>
        <end position="780"/>
    </location>
</feature>
<feature type="topological domain" description="Cytoplasmic" evidence="1">
    <location>
        <begin position="781"/>
        <end position="800"/>
    </location>
</feature>
<feature type="repeat" description="LRR 1" evidence="1">
    <location>
        <begin position="109"/>
        <end position="131"/>
    </location>
</feature>
<feature type="repeat" description="LRR 2" evidence="1">
    <location>
        <begin position="133"/>
        <end position="156"/>
    </location>
</feature>
<feature type="repeat" description="LRR 3" evidence="1">
    <location>
        <begin position="157"/>
        <end position="179"/>
    </location>
</feature>
<feature type="repeat" description="LRR 4" evidence="1">
    <location>
        <begin position="190"/>
        <end position="213"/>
    </location>
</feature>
<feature type="repeat" description="LRR 5" evidence="1">
    <location>
        <begin position="214"/>
        <end position="238"/>
    </location>
</feature>
<feature type="repeat" description="LRR 6" evidence="1">
    <location>
        <begin position="240"/>
        <end position="262"/>
    </location>
</feature>
<feature type="repeat" description="LRR 7" evidence="1">
    <location>
        <begin position="263"/>
        <end position="288"/>
    </location>
</feature>
<feature type="repeat" description="LRR 8" evidence="1">
    <location>
        <begin position="294"/>
        <end position="311"/>
    </location>
</feature>
<feature type="repeat" description="LRR 9" evidence="1">
    <location>
        <begin position="312"/>
        <end position="334"/>
    </location>
</feature>
<feature type="repeat" description="LRR 10" evidence="1">
    <location>
        <begin position="335"/>
        <end position="358"/>
    </location>
</feature>
<feature type="repeat" description="LRR 11" evidence="1">
    <location>
        <begin position="360"/>
        <end position="383"/>
    </location>
</feature>
<feature type="repeat" description="LRR 12" evidence="1">
    <location>
        <begin position="385"/>
        <end position="406"/>
    </location>
</feature>
<feature type="repeat" description="LRR 13" evidence="1">
    <location>
        <begin position="407"/>
        <end position="430"/>
    </location>
</feature>
<feature type="repeat" description="LRR 14" evidence="1">
    <location>
        <begin position="431"/>
        <end position="453"/>
    </location>
</feature>
<feature type="repeat" description="LRR 15" evidence="1">
    <location>
        <begin position="455"/>
        <end position="477"/>
    </location>
</feature>
<feature type="repeat" description="LRR 16" evidence="1">
    <location>
        <begin position="479"/>
        <end position="500"/>
    </location>
</feature>
<feature type="repeat" description="LRR 17" evidence="1">
    <location>
        <begin position="502"/>
        <end position="523"/>
    </location>
</feature>
<feature type="repeat" description="LRR 18" evidence="1">
    <location>
        <begin position="524"/>
        <end position="550"/>
    </location>
</feature>
<feature type="repeat" description="LRR 19" evidence="1">
    <location>
        <begin position="551"/>
        <end position="574"/>
    </location>
</feature>
<feature type="repeat" description="LRR 20" evidence="1">
    <location>
        <begin position="621"/>
        <end position="645"/>
    </location>
</feature>
<feature type="repeat" description="LRR 21" evidence="1">
    <location>
        <begin position="646"/>
        <end position="669"/>
    </location>
</feature>
<feature type="repeat" description="LRR 22" evidence="1">
    <location>
        <begin position="670"/>
        <end position="693"/>
    </location>
</feature>
<feature type="repeat" description="LRR 23" evidence="1">
    <location>
        <begin position="695"/>
        <end position="718"/>
    </location>
</feature>
<feature type="glycosylation site" description="N-linked (GlcNAc...) asparagine" evidence="2">
    <location>
        <position position="66"/>
    </location>
</feature>
<feature type="glycosylation site" description="N-linked (GlcNAc...) asparagine" evidence="2">
    <location>
        <position position="102"/>
    </location>
</feature>
<feature type="glycosylation site" description="N-linked (GlcNAc...) asparagine" evidence="2">
    <location>
        <position position="155"/>
    </location>
</feature>
<feature type="glycosylation site" description="N-linked (GlcNAc...) asparagine" evidence="2">
    <location>
        <position position="210"/>
    </location>
</feature>
<feature type="glycosylation site" description="N-linked (GlcNAc...) asparagine" evidence="2">
    <location>
        <position position="259"/>
    </location>
</feature>
<feature type="glycosylation site" description="N-linked (GlcNAc...) asparagine" evidence="2">
    <location>
        <position position="323"/>
    </location>
</feature>
<feature type="glycosylation site" description="N-linked (GlcNAc...) asparagine" evidence="2">
    <location>
        <position position="333"/>
    </location>
</feature>
<feature type="glycosylation site" description="N-linked (GlcNAc...) asparagine" evidence="2">
    <location>
        <position position="365"/>
    </location>
</feature>
<feature type="glycosylation site" description="N-linked (GlcNAc...) asparagine" evidence="2">
    <location>
        <position position="442"/>
    </location>
</feature>
<feature type="glycosylation site" description="N-linked (GlcNAc...) asparagine" evidence="2">
    <location>
        <position position="465"/>
    </location>
</feature>
<feature type="glycosylation site" description="N-linked (GlcNAc...) asparagine" evidence="2">
    <location>
        <position position="499"/>
    </location>
</feature>
<feature type="glycosylation site" description="N-linked (GlcNAc...) asparagine" evidence="2">
    <location>
        <position position="514"/>
    </location>
</feature>
<feature type="glycosylation site" description="N-linked (GlcNAc...) asparagine" evidence="2">
    <location>
        <position position="668"/>
    </location>
</feature>
<feature type="glycosylation site" description="N-linked (GlcNAc...) asparagine" evidence="2">
    <location>
        <position position="700"/>
    </location>
</feature>
<feature type="splice variant" id="VSP_059570" description="In isoform 2.">
    <location>
        <begin position="205"/>
        <end position="298"/>
    </location>
</feature>
<reference key="1">
    <citation type="journal article" date="1999" name="Nature">
        <title>Sequence and analysis of chromosome 4 of the plant Arabidopsis thaliana.</title>
        <authorList>
            <person name="Mayer K.F.X."/>
            <person name="Schueller C."/>
            <person name="Wambutt R."/>
            <person name="Murphy G."/>
            <person name="Volckaert G."/>
            <person name="Pohl T."/>
            <person name="Duesterhoeft A."/>
            <person name="Stiekema W."/>
            <person name="Entian K.-D."/>
            <person name="Terryn N."/>
            <person name="Harris B."/>
            <person name="Ansorge W."/>
            <person name="Brandt P."/>
            <person name="Grivell L.A."/>
            <person name="Rieger M."/>
            <person name="Weichselgartner M."/>
            <person name="de Simone V."/>
            <person name="Obermaier B."/>
            <person name="Mache R."/>
            <person name="Mueller M."/>
            <person name="Kreis M."/>
            <person name="Delseny M."/>
            <person name="Puigdomenech P."/>
            <person name="Watson M."/>
            <person name="Schmidtheini T."/>
            <person name="Reichert B."/>
            <person name="Portetelle D."/>
            <person name="Perez-Alonso M."/>
            <person name="Boutry M."/>
            <person name="Bancroft I."/>
            <person name="Vos P."/>
            <person name="Hoheisel J."/>
            <person name="Zimmermann W."/>
            <person name="Wedler H."/>
            <person name="Ridley P."/>
            <person name="Langham S.-A."/>
            <person name="McCullagh B."/>
            <person name="Bilham L."/>
            <person name="Robben J."/>
            <person name="van der Schueren J."/>
            <person name="Grymonprez B."/>
            <person name="Chuang Y.-J."/>
            <person name="Vandenbussche F."/>
            <person name="Braeken M."/>
            <person name="Weltjens I."/>
            <person name="Voet M."/>
            <person name="Bastiaens I."/>
            <person name="Aert R."/>
            <person name="Defoor E."/>
            <person name="Weitzenegger T."/>
            <person name="Bothe G."/>
            <person name="Ramsperger U."/>
            <person name="Hilbert H."/>
            <person name="Braun M."/>
            <person name="Holzer E."/>
            <person name="Brandt A."/>
            <person name="Peters S."/>
            <person name="van Staveren M."/>
            <person name="Dirkse W."/>
            <person name="Mooijman P."/>
            <person name="Klein Lankhorst R."/>
            <person name="Rose M."/>
            <person name="Hauf J."/>
            <person name="Koetter P."/>
            <person name="Berneiser S."/>
            <person name="Hempel S."/>
            <person name="Feldpausch M."/>
            <person name="Lamberth S."/>
            <person name="Van den Daele H."/>
            <person name="De Keyser A."/>
            <person name="Buysshaert C."/>
            <person name="Gielen J."/>
            <person name="Villarroel R."/>
            <person name="De Clercq R."/>
            <person name="van Montagu M."/>
            <person name="Rogers J."/>
            <person name="Cronin A."/>
            <person name="Quail M.A."/>
            <person name="Bray-Allen S."/>
            <person name="Clark L."/>
            <person name="Doggett J."/>
            <person name="Hall S."/>
            <person name="Kay M."/>
            <person name="Lennard N."/>
            <person name="McLay K."/>
            <person name="Mayes R."/>
            <person name="Pettett A."/>
            <person name="Rajandream M.A."/>
            <person name="Lyne M."/>
            <person name="Benes V."/>
            <person name="Rechmann S."/>
            <person name="Borkova D."/>
            <person name="Bloecker H."/>
            <person name="Scharfe M."/>
            <person name="Grimm M."/>
            <person name="Loehnert T.-H."/>
            <person name="Dose S."/>
            <person name="de Haan M."/>
            <person name="Maarse A.C."/>
            <person name="Schaefer M."/>
            <person name="Mueller-Auer S."/>
            <person name="Gabel C."/>
            <person name="Fuchs M."/>
            <person name="Fartmann B."/>
            <person name="Granderath K."/>
            <person name="Dauner D."/>
            <person name="Herzl A."/>
            <person name="Neumann S."/>
            <person name="Argiriou A."/>
            <person name="Vitale D."/>
            <person name="Liguori R."/>
            <person name="Piravandi E."/>
            <person name="Massenet O."/>
            <person name="Quigley F."/>
            <person name="Clabauld G."/>
            <person name="Muendlein A."/>
            <person name="Felber R."/>
            <person name="Schnabl S."/>
            <person name="Hiller R."/>
            <person name="Schmidt W."/>
            <person name="Lecharny A."/>
            <person name="Aubourg S."/>
            <person name="Chefdor F."/>
            <person name="Cooke R."/>
            <person name="Berger C."/>
            <person name="Monfort A."/>
            <person name="Casacuberta E."/>
            <person name="Gibbons T."/>
            <person name="Weber N."/>
            <person name="Vandenbol M."/>
            <person name="Bargues M."/>
            <person name="Terol J."/>
            <person name="Torres A."/>
            <person name="Perez-Perez A."/>
            <person name="Purnelle B."/>
            <person name="Bent E."/>
            <person name="Johnson S."/>
            <person name="Tacon D."/>
            <person name="Jesse T."/>
            <person name="Heijnen L."/>
            <person name="Schwarz S."/>
            <person name="Scholler P."/>
            <person name="Heber S."/>
            <person name="Francs P."/>
            <person name="Bielke C."/>
            <person name="Frishman D."/>
            <person name="Haase D."/>
            <person name="Lemcke K."/>
            <person name="Mewes H.-W."/>
            <person name="Stocker S."/>
            <person name="Zaccaria P."/>
            <person name="Bevan M."/>
            <person name="Wilson R.K."/>
            <person name="de la Bastide M."/>
            <person name="Habermann K."/>
            <person name="Parnell L."/>
            <person name="Dedhia N."/>
            <person name="Gnoj L."/>
            <person name="Schutz K."/>
            <person name="Huang E."/>
            <person name="Spiegel L."/>
            <person name="Sekhon M."/>
            <person name="Murray J."/>
            <person name="Sheet P."/>
            <person name="Cordes M."/>
            <person name="Abu-Threideh J."/>
            <person name="Stoneking T."/>
            <person name="Kalicki J."/>
            <person name="Graves T."/>
            <person name="Harmon G."/>
            <person name="Edwards J."/>
            <person name="Latreille P."/>
            <person name="Courtney L."/>
            <person name="Cloud J."/>
            <person name="Abbott A."/>
            <person name="Scott K."/>
            <person name="Johnson D."/>
            <person name="Minx P."/>
            <person name="Bentley D."/>
            <person name="Fulton B."/>
            <person name="Miller N."/>
            <person name="Greco T."/>
            <person name="Kemp K."/>
            <person name="Kramer J."/>
            <person name="Fulton L."/>
            <person name="Mardis E."/>
            <person name="Dante M."/>
            <person name="Pepin K."/>
            <person name="Hillier L.W."/>
            <person name="Nelson J."/>
            <person name="Spieth J."/>
            <person name="Ryan E."/>
            <person name="Andrews S."/>
            <person name="Geisel C."/>
            <person name="Layman D."/>
            <person name="Du H."/>
            <person name="Ali J."/>
            <person name="Berghoff A."/>
            <person name="Jones K."/>
            <person name="Drone K."/>
            <person name="Cotton M."/>
            <person name="Joshu C."/>
            <person name="Antonoiu B."/>
            <person name="Zidanic M."/>
            <person name="Strong C."/>
            <person name="Sun H."/>
            <person name="Lamar B."/>
            <person name="Yordan C."/>
            <person name="Ma P."/>
            <person name="Zhong J."/>
            <person name="Preston R."/>
            <person name="Vil D."/>
            <person name="Shekher M."/>
            <person name="Matero A."/>
            <person name="Shah R."/>
            <person name="Swaby I.K."/>
            <person name="O'Shaughnessy A."/>
            <person name="Rodriguez M."/>
            <person name="Hoffman J."/>
            <person name="Till S."/>
            <person name="Granat S."/>
            <person name="Shohdy N."/>
            <person name="Hasegawa A."/>
            <person name="Hameed A."/>
            <person name="Lodhi M."/>
            <person name="Johnson A."/>
            <person name="Chen E."/>
            <person name="Marra M.A."/>
            <person name="Martienssen R."/>
            <person name="McCombie W.R."/>
        </authorList>
    </citation>
    <scope>NUCLEOTIDE SEQUENCE [LARGE SCALE GENOMIC DNA]</scope>
    <source>
        <strain>cv. Columbia</strain>
    </source>
</reference>
<reference key="2">
    <citation type="journal article" date="2017" name="Plant J.">
        <title>Araport11: a complete reannotation of the Arabidopsis thaliana reference genome.</title>
        <authorList>
            <person name="Cheng C.Y."/>
            <person name="Krishnakumar V."/>
            <person name="Chan A.P."/>
            <person name="Thibaud-Nissen F."/>
            <person name="Schobel S."/>
            <person name="Town C.D."/>
        </authorList>
    </citation>
    <scope>GENOME REANNOTATION</scope>
    <source>
        <strain>cv. Columbia</strain>
    </source>
</reference>
<reference key="3">
    <citation type="journal article" date="2005" name="Plant Physiol.">
        <title>Phylogenomic analysis of the receptor-like proteins of rice and Arabidopsis.</title>
        <authorList>
            <person name="Fritz-Laylin L.K."/>
            <person name="Krishnamurthy N."/>
            <person name="Toer M."/>
            <person name="Sjoelander K.V."/>
            <person name="Jones J.D."/>
        </authorList>
    </citation>
    <scope>GENE FAMILY</scope>
</reference>
<reference key="4">
    <citation type="journal article" date="2008" name="Plant Physiol.">
        <title>A genome-wide functional investigation into the roles of receptor-like proteins in Arabidopsis.</title>
        <authorList>
            <person name="Wang G."/>
            <person name="Ellendorff U."/>
            <person name="Kemp B."/>
            <person name="Mansfield J.W."/>
            <person name="Forsyth A."/>
            <person name="Mitchell K."/>
            <person name="Bastas K."/>
            <person name="Liu C.-M."/>
            <person name="Woods-Toer A."/>
            <person name="Zipfel C."/>
            <person name="de Wit P.J.G.M."/>
            <person name="Jones J.D.G."/>
            <person name="Toer M."/>
            <person name="Thomma B.P.H.J."/>
        </authorList>
    </citation>
    <scope>GENE FAMILY</scope>
    <scope>NOMENCLATURE</scope>
    <source>
        <strain>cv. Columbia</strain>
    </source>
</reference>
<proteinExistence type="inferred from homology"/>
<name>RLP47_ARATH</name>
<keyword id="KW-0025">Alternative splicing</keyword>
<keyword id="KW-1003">Cell membrane</keyword>
<keyword id="KW-0325">Glycoprotein</keyword>
<keyword id="KW-0433">Leucine-rich repeat</keyword>
<keyword id="KW-0472">Membrane</keyword>
<keyword id="KW-0675">Receptor</keyword>
<keyword id="KW-1185">Reference proteome</keyword>
<keyword id="KW-0677">Repeat</keyword>
<keyword id="KW-0732">Signal</keyword>
<keyword id="KW-0812">Transmembrane</keyword>
<keyword id="KW-1133">Transmembrane helix</keyword>
<protein>
    <recommendedName>
        <fullName evidence="3">Receptor-like protein 47</fullName>
        <shortName evidence="3">AtRLP47</shortName>
    </recommendedName>
</protein>
<organism>
    <name type="scientific">Arabidopsis thaliana</name>
    <name type="common">Mouse-ear cress</name>
    <dbReference type="NCBI Taxonomy" id="3702"/>
    <lineage>
        <taxon>Eukaryota</taxon>
        <taxon>Viridiplantae</taxon>
        <taxon>Streptophyta</taxon>
        <taxon>Embryophyta</taxon>
        <taxon>Tracheophyta</taxon>
        <taxon>Spermatophyta</taxon>
        <taxon>Magnoliopsida</taxon>
        <taxon>eudicotyledons</taxon>
        <taxon>Gunneridae</taxon>
        <taxon>Pentapetalae</taxon>
        <taxon>rosids</taxon>
        <taxon>malvids</taxon>
        <taxon>Brassicales</taxon>
        <taxon>Brassicaceae</taxon>
        <taxon>Camelineae</taxon>
        <taxon>Arabidopsis</taxon>
    </lineage>
</organism>
<gene>
    <name evidence="3" type="primary">RLP47</name>
    <name evidence="5" type="ordered locus">At4g13810</name>
    <name evidence="6" type="ORF">F18A5.200</name>
</gene>
<sequence>MMHSSSVRRMITVKWSLCLIFCLTNSILVSAKHLCLPDQKDSLWGFKNEFNVPSPHSYAMTEKWRNNTDCCSWDGVSCDPKTGVVVELDLQYSHLNGPLRSNSSLFRLQHLQKLVLGSNHLSGILPDSIGNLKRLKVLVLVNCNLFGKIPSSLGNLSYLTHLDLSYNDFTSEGPDSMGNLNRLTDMLLKLSSVTWIDLGDNQLKGMLPSNMSSLSKLEAFDISGNSFSGTIPSSLFMIPSLILLHLGRNDFSGPFEIGNISSPSNLQLLNIGRNNFNPDIVDLSIFSPLLSLGYLDVSGINLKISSTVSLPSPIEYLGLLSCNISEFPKFLRNQTSLEYLDISANQIEGQVPEWLWSLPELRYVNISHNSFNGFEGPADVIQGGRELLVLDISSNIFQDPFPLLPVVSMNYLFSSNNRFSGEIPKTICELDNLRILVLSNNNFSGSIPRCFENLHLYVLHLRNNNLSGIFPEEAISHHLQSFDVGHNLFSGELPKSLINCSDIEFLNVEDNRINDTFPSWLELLPNLQILVLRSNEFYGPIFSPGDSLSFSRLRIFDISENRFTGVLPSDYFVGWSVMSSVVDIDGRIIQYTVTGIDRDFYHKSVALINKGLKMELVGSGFTIYKTIDVSGNRLEGDIPESIGLLKEVIVLSMSNNAFTGHIPPSLSNLSNLQSLDLSQNRLSGSIPGELGKLTFLEWMNFSHNRLEGPIPETTQIQTQDSSSFTENPGLCGAPLLKKCGGEEEATKQEQDEDKEEEDQVFSWIAAAIGYVPGVVCGLTIGHILVSHKRDWFMRIVSFFT</sequence>
<comment type="subcellular location">
    <subcellularLocation>
        <location evidence="4">Cell membrane</location>
        <topology evidence="4">Single-pass type I membrane protein</topology>
    </subcellularLocation>
</comment>
<comment type="alternative products">
    <event type="alternative splicing"/>
    <isoform>
        <id>Q9SVN2-1</id>
        <name>1</name>
        <sequence type="displayed"/>
    </isoform>
    <isoform>
        <id>Q9SVN2-2</id>
        <name>2</name>
        <sequence type="described" ref="VSP_059570"/>
    </isoform>
</comment>
<comment type="similarity">
    <text evidence="4">Belongs to the RLP family.</text>
</comment>
<comment type="sequence caution" evidence="4">
    <conflict type="erroneous gene model prediction">
        <sequence resource="EMBL-CDS" id="CAB36845"/>
    </conflict>
</comment>
<comment type="sequence caution" evidence="4">
    <conflict type="erroneous gene model prediction">
        <sequence resource="EMBL-CDS" id="CAB78423"/>
    </conflict>
</comment>